<accession>Q04T70</accession>
<sequence length="301" mass="33100">MKEILYRKSIQDRVRIKGIGLHSGKEVNLTAHPAPSGTGIVFEYRKGLEKASISVELSNVVDTSNATTLGDGLHKIQTVEHLLAAIYALGLTDLILEIDAVEVPIMDGSSLPFLQALESAGIVKYPEIIEPIYVQNPLWVVDGDKYLVLLPSDELKVTYTIDFNHPLLKGQNITISLDKETIKQEILPARTFGFLKDVEALQAKGLAMGGSLDNAIVLTQDGYLNQQLRFENECVRHKILDLFGDISIAGRPIIGHYLASKAGHALDISMAKLVMSSVTGDEISKYKSRRIPLFKRKVAVV</sequence>
<reference key="1">
    <citation type="journal article" date="2006" name="Proc. Natl. Acad. Sci. U.S.A.">
        <title>Genome reduction in Leptospira borgpetersenii reflects limited transmission potential.</title>
        <authorList>
            <person name="Bulach D.M."/>
            <person name="Zuerner R.L."/>
            <person name="Wilson P."/>
            <person name="Seemann T."/>
            <person name="McGrath A."/>
            <person name="Cullen P.A."/>
            <person name="Davis J."/>
            <person name="Johnson M."/>
            <person name="Kuczek E."/>
            <person name="Alt D.P."/>
            <person name="Peterson-Burch B."/>
            <person name="Coppel R.L."/>
            <person name="Rood J.I."/>
            <person name="Davies J.K."/>
            <person name="Adler B."/>
        </authorList>
    </citation>
    <scope>NUCLEOTIDE SEQUENCE [LARGE SCALE GENOMIC DNA]</scope>
    <source>
        <strain>JB197</strain>
    </source>
</reference>
<gene>
    <name evidence="1" type="primary">lpxC</name>
    <name type="ordered locus">LBJ_1315</name>
</gene>
<proteinExistence type="inferred from homology"/>
<name>LPXC_LEPBJ</name>
<feature type="chain" id="PRO_1000122799" description="UDP-3-O-acyl-N-acetylglucosamine deacetylase">
    <location>
        <begin position="1"/>
        <end position="301"/>
    </location>
</feature>
<feature type="active site" description="Proton donor" evidence="1">
    <location>
        <position position="264"/>
    </location>
</feature>
<feature type="binding site" evidence="1">
    <location>
        <position position="81"/>
    </location>
    <ligand>
        <name>Zn(2+)</name>
        <dbReference type="ChEBI" id="CHEBI:29105"/>
    </ligand>
</feature>
<feature type="binding site" evidence="1">
    <location>
        <position position="237"/>
    </location>
    <ligand>
        <name>Zn(2+)</name>
        <dbReference type="ChEBI" id="CHEBI:29105"/>
    </ligand>
</feature>
<feature type="binding site" evidence="1">
    <location>
        <position position="241"/>
    </location>
    <ligand>
        <name>Zn(2+)</name>
        <dbReference type="ChEBI" id="CHEBI:29105"/>
    </ligand>
</feature>
<protein>
    <recommendedName>
        <fullName evidence="1">UDP-3-O-acyl-N-acetylglucosamine deacetylase</fullName>
        <shortName evidence="1">UDP-3-O-acyl-GlcNAc deacetylase</shortName>
        <ecNumber evidence="1">3.5.1.108</ecNumber>
    </recommendedName>
    <alternativeName>
        <fullName evidence="1">UDP-3-O-[R-3-hydroxymyristoyl]-N-acetylglucosamine deacetylase</fullName>
    </alternativeName>
</protein>
<dbReference type="EC" id="3.5.1.108" evidence="1"/>
<dbReference type="EMBL" id="CP000350">
    <property type="protein sequence ID" value="ABJ75900.1"/>
    <property type="molecule type" value="Genomic_DNA"/>
</dbReference>
<dbReference type="RefSeq" id="WP_002754344.1">
    <property type="nucleotide sequence ID" value="NC_008510.1"/>
</dbReference>
<dbReference type="SMR" id="Q04T70"/>
<dbReference type="KEGG" id="lbj:LBJ_1315"/>
<dbReference type="HOGENOM" id="CLU_046528_1_0_12"/>
<dbReference type="UniPathway" id="UPA00359">
    <property type="reaction ID" value="UER00478"/>
</dbReference>
<dbReference type="Proteomes" id="UP000000656">
    <property type="component" value="Chromosome 1"/>
</dbReference>
<dbReference type="GO" id="GO:0016020">
    <property type="term" value="C:membrane"/>
    <property type="evidence" value="ECO:0007669"/>
    <property type="project" value="GOC"/>
</dbReference>
<dbReference type="GO" id="GO:0046872">
    <property type="term" value="F:metal ion binding"/>
    <property type="evidence" value="ECO:0007669"/>
    <property type="project" value="UniProtKB-KW"/>
</dbReference>
<dbReference type="GO" id="GO:0103117">
    <property type="term" value="F:UDP-3-O-acyl-N-acetylglucosamine deacetylase activity"/>
    <property type="evidence" value="ECO:0007669"/>
    <property type="project" value="UniProtKB-UniRule"/>
</dbReference>
<dbReference type="GO" id="GO:0009245">
    <property type="term" value="P:lipid A biosynthetic process"/>
    <property type="evidence" value="ECO:0007669"/>
    <property type="project" value="UniProtKB-UniRule"/>
</dbReference>
<dbReference type="Gene3D" id="3.30.230.20">
    <property type="entry name" value="lpxc deacetylase, domain 1"/>
    <property type="match status" value="1"/>
</dbReference>
<dbReference type="Gene3D" id="3.30.1700.10">
    <property type="entry name" value="lpxc deacetylase, domain 2"/>
    <property type="match status" value="1"/>
</dbReference>
<dbReference type="HAMAP" id="MF_00388">
    <property type="entry name" value="LpxC"/>
    <property type="match status" value="1"/>
</dbReference>
<dbReference type="InterPro" id="IPR020568">
    <property type="entry name" value="Ribosomal_Su5_D2-typ_SF"/>
</dbReference>
<dbReference type="InterPro" id="IPR004463">
    <property type="entry name" value="UDP-acyl_GlcNac_deAcase"/>
</dbReference>
<dbReference type="InterPro" id="IPR011334">
    <property type="entry name" value="UDP-acyl_GlcNac_deAcase_C"/>
</dbReference>
<dbReference type="InterPro" id="IPR015870">
    <property type="entry name" value="UDP-acyl_N-AcGlcN_deAcase_N"/>
</dbReference>
<dbReference type="NCBIfam" id="TIGR00325">
    <property type="entry name" value="lpxC"/>
    <property type="match status" value="1"/>
</dbReference>
<dbReference type="PANTHER" id="PTHR33694">
    <property type="entry name" value="UDP-3-O-ACYL-N-ACETYLGLUCOSAMINE DEACETYLASE 1, MITOCHONDRIAL-RELATED"/>
    <property type="match status" value="1"/>
</dbReference>
<dbReference type="PANTHER" id="PTHR33694:SF1">
    <property type="entry name" value="UDP-3-O-ACYL-N-ACETYLGLUCOSAMINE DEACETYLASE 1, MITOCHONDRIAL-RELATED"/>
    <property type="match status" value="1"/>
</dbReference>
<dbReference type="Pfam" id="PF03331">
    <property type="entry name" value="LpxC"/>
    <property type="match status" value="1"/>
</dbReference>
<dbReference type="SUPFAM" id="SSF54211">
    <property type="entry name" value="Ribosomal protein S5 domain 2-like"/>
    <property type="match status" value="2"/>
</dbReference>
<evidence type="ECO:0000255" key="1">
    <source>
        <dbReference type="HAMAP-Rule" id="MF_00388"/>
    </source>
</evidence>
<organism>
    <name type="scientific">Leptospira borgpetersenii serovar Hardjo-bovis (strain JB197)</name>
    <dbReference type="NCBI Taxonomy" id="355277"/>
    <lineage>
        <taxon>Bacteria</taxon>
        <taxon>Pseudomonadati</taxon>
        <taxon>Spirochaetota</taxon>
        <taxon>Spirochaetia</taxon>
        <taxon>Leptospirales</taxon>
        <taxon>Leptospiraceae</taxon>
        <taxon>Leptospira</taxon>
    </lineage>
</organism>
<keyword id="KW-0378">Hydrolase</keyword>
<keyword id="KW-0441">Lipid A biosynthesis</keyword>
<keyword id="KW-0444">Lipid biosynthesis</keyword>
<keyword id="KW-0443">Lipid metabolism</keyword>
<keyword id="KW-0479">Metal-binding</keyword>
<keyword id="KW-0862">Zinc</keyword>
<comment type="function">
    <text evidence="1">Catalyzes the hydrolysis of UDP-3-O-myristoyl-N-acetylglucosamine to form UDP-3-O-myristoylglucosamine and acetate, the committed step in lipid A biosynthesis.</text>
</comment>
<comment type="catalytic activity">
    <reaction evidence="1">
        <text>a UDP-3-O-[(3R)-3-hydroxyacyl]-N-acetyl-alpha-D-glucosamine + H2O = a UDP-3-O-[(3R)-3-hydroxyacyl]-alpha-D-glucosamine + acetate</text>
        <dbReference type="Rhea" id="RHEA:67816"/>
        <dbReference type="ChEBI" id="CHEBI:15377"/>
        <dbReference type="ChEBI" id="CHEBI:30089"/>
        <dbReference type="ChEBI" id="CHEBI:137740"/>
        <dbReference type="ChEBI" id="CHEBI:173225"/>
        <dbReference type="EC" id="3.5.1.108"/>
    </reaction>
</comment>
<comment type="cofactor">
    <cofactor evidence="1">
        <name>Zn(2+)</name>
        <dbReference type="ChEBI" id="CHEBI:29105"/>
    </cofactor>
</comment>
<comment type="pathway">
    <text evidence="1">Glycolipid biosynthesis; lipid IV(A) biosynthesis; lipid IV(A) from (3R)-3-hydroxytetradecanoyl-[acyl-carrier-protein] and UDP-N-acetyl-alpha-D-glucosamine: step 2/6.</text>
</comment>
<comment type="similarity">
    <text evidence="1">Belongs to the LpxC family.</text>
</comment>